<feature type="chain" id="PRO_0000236330" description="Thiazole synthase">
    <location>
        <begin position="1"/>
        <end position="257"/>
    </location>
</feature>
<feature type="active site" description="Schiff-base intermediate with DXP" evidence="1">
    <location>
        <position position="98"/>
    </location>
</feature>
<feature type="binding site" evidence="1">
    <location>
        <position position="159"/>
    </location>
    <ligand>
        <name>1-deoxy-D-xylulose 5-phosphate</name>
        <dbReference type="ChEBI" id="CHEBI:57792"/>
    </ligand>
</feature>
<feature type="binding site" evidence="1">
    <location>
        <begin position="185"/>
        <end position="186"/>
    </location>
    <ligand>
        <name>1-deoxy-D-xylulose 5-phosphate</name>
        <dbReference type="ChEBI" id="CHEBI:57792"/>
    </ligand>
</feature>
<feature type="binding site" evidence="1">
    <location>
        <begin position="207"/>
        <end position="208"/>
    </location>
    <ligand>
        <name>1-deoxy-D-xylulose 5-phosphate</name>
        <dbReference type="ChEBI" id="CHEBI:57792"/>
    </ligand>
</feature>
<dbReference type="EC" id="2.8.1.10" evidence="1"/>
<dbReference type="EMBL" id="CP000251">
    <property type="protein sequence ID" value="ABC82288.1"/>
    <property type="molecule type" value="Genomic_DNA"/>
</dbReference>
<dbReference type="RefSeq" id="WP_011421570.1">
    <property type="nucleotide sequence ID" value="NC_007760.1"/>
</dbReference>
<dbReference type="SMR" id="Q2IKW1"/>
<dbReference type="STRING" id="290397.Adeh_2518"/>
<dbReference type="KEGG" id="ade:Adeh_2518"/>
<dbReference type="eggNOG" id="COG2022">
    <property type="taxonomic scope" value="Bacteria"/>
</dbReference>
<dbReference type="HOGENOM" id="CLU_062233_1_0_7"/>
<dbReference type="OrthoDB" id="9805935at2"/>
<dbReference type="UniPathway" id="UPA00060"/>
<dbReference type="Proteomes" id="UP000001935">
    <property type="component" value="Chromosome"/>
</dbReference>
<dbReference type="GO" id="GO:0005737">
    <property type="term" value="C:cytoplasm"/>
    <property type="evidence" value="ECO:0007669"/>
    <property type="project" value="UniProtKB-SubCell"/>
</dbReference>
<dbReference type="GO" id="GO:1990107">
    <property type="term" value="F:thiazole synthase activity"/>
    <property type="evidence" value="ECO:0007669"/>
    <property type="project" value="UniProtKB-EC"/>
</dbReference>
<dbReference type="GO" id="GO:0009229">
    <property type="term" value="P:thiamine diphosphate biosynthetic process"/>
    <property type="evidence" value="ECO:0007669"/>
    <property type="project" value="UniProtKB-UniRule"/>
</dbReference>
<dbReference type="CDD" id="cd04728">
    <property type="entry name" value="ThiG"/>
    <property type="match status" value="1"/>
</dbReference>
<dbReference type="Gene3D" id="3.20.20.70">
    <property type="entry name" value="Aldolase class I"/>
    <property type="match status" value="1"/>
</dbReference>
<dbReference type="HAMAP" id="MF_00443">
    <property type="entry name" value="ThiG"/>
    <property type="match status" value="1"/>
</dbReference>
<dbReference type="InterPro" id="IPR013785">
    <property type="entry name" value="Aldolase_TIM"/>
</dbReference>
<dbReference type="InterPro" id="IPR033983">
    <property type="entry name" value="Thiazole_synthase_ThiG"/>
</dbReference>
<dbReference type="InterPro" id="IPR008867">
    <property type="entry name" value="ThiG"/>
</dbReference>
<dbReference type="PANTHER" id="PTHR34266">
    <property type="entry name" value="THIAZOLE SYNTHASE"/>
    <property type="match status" value="1"/>
</dbReference>
<dbReference type="PANTHER" id="PTHR34266:SF2">
    <property type="entry name" value="THIAZOLE SYNTHASE"/>
    <property type="match status" value="1"/>
</dbReference>
<dbReference type="Pfam" id="PF05690">
    <property type="entry name" value="ThiG"/>
    <property type="match status" value="1"/>
</dbReference>
<dbReference type="SUPFAM" id="SSF110399">
    <property type="entry name" value="ThiG-like"/>
    <property type="match status" value="1"/>
</dbReference>
<evidence type="ECO:0000255" key="1">
    <source>
        <dbReference type="HAMAP-Rule" id="MF_00443"/>
    </source>
</evidence>
<reference key="1">
    <citation type="submission" date="2006-01" db="EMBL/GenBank/DDBJ databases">
        <title>Complete sequence of Anaeromyxobacter dehalogenans 2CP-C.</title>
        <authorList>
            <person name="Copeland A."/>
            <person name="Lucas S."/>
            <person name="Lapidus A."/>
            <person name="Barry K."/>
            <person name="Detter J.C."/>
            <person name="Glavina T."/>
            <person name="Hammon N."/>
            <person name="Israni S."/>
            <person name="Pitluck S."/>
            <person name="Brettin T."/>
            <person name="Bruce D."/>
            <person name="Han C."/>
            <person name="Tapia R."/>
            <person name="Gilna P."/>
            <person name="Kiss H."/>
            <person name="Schmutz J."/>
            <person name="Larimer F."/>
            <person name="Land M."/>
            <person name="Kyrpides N."/>
            <person name="Anderson I."/>
            <person name="Sanford R.A."/>
            <person name="Ritalahti K.M."/>
            <person name="Thomas H.S."/>
            <person name="Kirby J.R."/>
            <person name="Zhulin I.B."/>
            <person name="Loeffler F.E."/>
            <person name="Richardson P."/>
        </authorList>
    </citation>
    <scope>NUCLEOTIDE SEQUENCE [LARGE SCALE GENOMIC DNA]</scope>
    <source>
        <strain>2CP-C</strain>
    </source>
</reference>
<proteinExistence type="inferred from homology"/>
<accession>Q2IKW1</accession>
<comment type="function">
    <text evidence="1">Catalyzes the rearrangement of 1-deoxy-D-xylulose 5-phosphate (DXP) to produce the thiazole phosphate moiety of thiamine. Sulfur is provided by the thiocarboxylate moiety of the carrier protein ThiS. In vitro, sulfur can be provided by H(2)S.</text>
</comment>
<comment type="catalytic activity">
    <reaction evidence="1">
        <text>[ThiS sulfur-carrier protein]-C-terminal-Gly-aminoethanethioate + 2-iminoacetate + 1-deoxy-D-xylulose 5-phosphate = [ThiS sulfur-carrier protein]-C-terminal Gly-Gly + 2-[(2R,5Z)-2-carboxy-4-methylthiazol-5(2H)-ylidene]ethyl phosphate + 2 H2O + H(+)</text>
        <dbReference type="Rhea" id="RHEA:26297"/>
        <dbReference type="Rhea" id="RHEA-COMP:12909"/>
        <dbReference type="Rhea" id="RHEA-COMP:19908"/>
        <dbReference type="ChEBI" id="CHEBI:15377"/>
        <dbReference type="ChEBI" id="CHEBI:15378"/>
        <dbReference type="ChEBI" id="CHEBI:57792"/>
        <dbReference type="ChEBI" id="CHEBI:62899"/>
        <dbReference type="ChEBI" id="CHEBI:77846"/>
        <dbReference type="ChEBI" id="CHEBI:90778"/>
        <dbReference type="ChEBI" id="CHEBI:232372"/>
        <dbReference type="EC" id="2.8.1.10"/>
    </reaction>
</comment>
<comment type="pathway">
    <text evidence="1">Cofactor biosynthesis; thiamine diphosphate biosynthesis.</text>
</comment>
<comment type="subunit">
    <text evidence="1">Homotetramer. Forms heterodimers with either ThiH or ThiS.</text>
</comment>
<comment type="subcellular location">
    <subcellularLocation>
        <location evidence="1">Cytoplasm</location>
    </subcellularLocation>
</comment>
<comment type="similarity">
    <text evidence="1">Belongs to the ThiG family.</text>
</comment>
<keyword id="KW-0963">Cytoplasm</keyword>
<keyword id="KW-1185">Reference proteome</keyword>
<keyword id="KW-0704">Schiff base</keyword>
<keyword id="KW-0784">Thiamine biosynthesis</keyword>
<keyword id="KW-0808">Transferase</keyword>
<name>THIG_ANADE</name>
<gene>
    <name evidence="1" type="primary">thiG</name>
    <name type="ordered locus">Adeh_2518</name>
</gene>
<sequence>MADTWSIGAHAFTSRLLVGTGKYPDFPTMQRALAASGAEVVTVAVRRLDLSKKGEESLLAWIPKGMKLLPNTAACFTAEEAIRTARLGRELEMGDLVKLEVIGDRRTLFPDVEGLIQAAKVLVKEGFTVLPYTNDDPVTAKKLEDAGCAAVMPLGAPIGSGLGLRNPYNLRIIMETVQVPVLVDAGVGTASDAALAMELGAVAVLMNTAIAEAKDPVLMAEAMRAGVEGGRKAFLAGRIPMKLHAAASSPMSGLIGT</sequence>
<protein>
    <recommendedName>
        <fullName evidence="1">Thiazole synthase</fullName>
        <ecNumber evidence="1">2.8.1.10</ecNumber>
    </recommendedName>
</protein>
<organism>
    <name type="scientific">Anaeromyxobacter dehalogenans (strain 2CP-C)</name>
    <dbReference type="NCBI Taxonomy" id="290397"/>
    <lineage>
        <taxon>Bacteria</taxon>
        <taxon>Pseudomonadati</taxon>
        <taxon>Myxococcota</taxon>
        <taxon>Myxococcia</taxon>
        <taxon>Myxococcales</taxon>
        <taxon>Cystobacterineae</taxon>
        <taxon>Anaeromyxobacteraceae</taxon>
        <taxon>Anaeromyxobacter</taxon>
    </lineage>
</organism>